<accession>Q4USF8</accession>
<protein>
    <recommendedName>
        <fullName evidence="1">GTPase Era</fullName>
    </recommendedName>
</protein>
<keyword id="KW-0997">Cell inner membrane</keyword>
<keyword id="KW-1003">Cell membrane</keyword>
<keyword id="KW-0963">Cytoplasm</keyword>
<keyword id="KW-0342">GTP-binding</keyword>
<keyword id="KW-0472">Membrane</keyword>
<keyword id="KW-0547">Nucleotide-binding</keyword>
<keyword id="KW-0690">Ribosome biogenesis</keyword>
<keyword id="KW-0694">RNA-binding</keyword>
<keyword id="KW-0699">rRNA-binding</keyword>
<gene>
    <name evidence="1" type="primary">era</name>
    <name type="ordered locus">XC_2967</name>
</gene>
<evidence type="ECO:0000255" key="1">
    <source>
        <dbReference type="HAMAP-Rule" id="MF_00367"/>
    </source>
</evidence>
<evidence type="ECO:0000255" key="2">
    <source>
        <dbReference type="PROSITE-ProRule" id="PRU01050"/>
    </source>
</evidence>
<dbReference type="EMBL" id="CP000050">
    <property type="protein sequence ID" value="AAY50015.1"/>
    <property type="molecule type" value="Genomic_DNA"/>
</dbReference>
<dbReference type="RefSeq" id="WP_011036468.1">
    <property type="nucleotide sequence ID" value="NZ_CP155948.1"/>
</dbReference>
<dbReference type="SMR" id="Q4USF8"/>
<dbReference type="GeneID" id="58014134"/>
<dbReference type="KEGG" id="xcb:XC_2967"/>
<dbReference type="HOGENOM" id="CLU_038009_1_2_6"/>
<dbReference type="Proteomes" id="UP000000420">
    <property type="component" value="Chromosome"/>
</dbReference>
<dbReference type="GO" id="GO:0005829">
    <property type="term" value="C:cytosol"/>
    <property type="evidence" value="ECO:0007669"/>
    <property type="project" value="TreeGrafter"/>
</dbReference>
<dbReference type="GO" id="GO:0005886">
    <property type="term" value="C:plasma membrane"/>
    <property type="evidence" value="ECO:0007669"/>
    <property type="project" value="UniProtKB-SubCell"/>
</dbReference>
<dbReference type="GO" id="GO:0005525">
    <property type="term" value="F:GTP binding"/>
    <property type="evidence" value="ECO:0007669"/>
    <property type="project" value="UniProtKB-UniRule"/>
</dbReference>
<dbReference type="GO" id="GO:0003924">
    <property type="term" value="F:GTPase activity"/>
    <property type="evidence" value="ECO:0007669"/>
    <property type="project" value="UniProtKB-UniRule"/>
</dbReference>
<dbReference type="GO" id="GO:0043024">
    <property type="term" value="F:ribosomal small subunit binding"/>
    <property type="evidence" value="ECO:0007669"/>
    <property type="project" value="TreeGrafter"/>
</dbReference>
<dbReference type="GO" id="GO:0070181">
    <property type="term" value="F:small ribosomal subunit rRNA binding"/>
    <property type="evidence" value="ECO:0007669"/>
    <property type="project" value="UniProtKB-UniRule"/>
</dbReference>
<dbReference type="GO" id="GO:0000028">
    <property type="term" value="P:ribosomal small subunit assembly"/>
    <property type="evidence" value="ECO:0007669"/>
    <property type="project" value="TreeGrafter"/>
</dbReference>
<dbReference type="CDD" id="cd04163">
    <property type="entry name" value="Era"/>
    <property type="match status" value="1"/>
</dbReference>
<dbReference type="CDD" id="cd22534">
    <property type="entry name" value="KH-II_Era"/>
    <property type="match status" value="1"/>
</dbReference>
<dbReference type="FunFam" id="3.30.300.20:FF:000003">
    <property type="entry name" value="GTPase Era"/>
    <property type="match status" value="1"/>
</dbReference>
<dbReference type="FunFam" id="3.40.50.300:FF:001543">
    <property type="entry name" value="GTPase Era"/>
    <property type="match status" value="1"/>
</dbReference>
<dbReference type="Gene3D" id="3.30.300.20">
    <property type="match status" value="1"/>
</dbReference>
<dbReference type="Gene3D" id="3.40.50.300">
    <property type="entry name" value="P-loop containing nucleotide triphosphate hydrolases"/>
    <property type="match status" value="1"/>
</dbReference>
<dbReference type="HAMAP" id="MF_00367">
    <property type="entry name" value="GTPase_Era"/>
    <property type="match status" value="1"/>
</dbReference>
<dbReference type="InterPro" id="IPR030388">
    <property type="entry name" value="G_ERA_dom"/>
</dbReference>
<dbReference type="InterPro" id="IPR006073">
    <property type="entry name" value="GTP-bd"/>
</dbReference>
<dbReference type="InterPro" id="IPR005662">
    <property type="entry name" value="GTPase_Era-like"/>
</dbReference>
<dbReference type="InterPro" id="IPR015946">
    <property type="entry name" value="KH_dom-like_a/b"/>
</dbReference>
<dbReference type="InterPro" id="IPR004044">
    <property type="entry name" value="KH_dom_type_2"/>
</dbReference>
<dbReference type="InterPro" id="IPR009019">
    <property type="entry name" value="KH_sf_prok-type"/>
</dbReference>
<dbReference type="InterPro" id="IPR027417">
    <property type="entry name" value="P-loop_NTPase"/>
</dbReference>
<dbReference type="InterPro" id="IPR005225">
    <property type="entry name" value="Small_GTP-bd"/>
</dbReference>
<dbReference type="NCBIfam" id="TIGR00436">
    <property type="entry name" value="era"/>
    <property type="match status" value="1"/>
</dbReference>
<dbReference type="NCBIfam" id="NF000908">
    <property type="entry name" value="PRK00089.1"/>
    <property type="match status" value="1"/>
</dbReference>
<dbReference type="NCBIfam" id="TIGR00231">
    <property type="entry name" value="small_GTP"/>
    <property type="match status" value="1"/>
</dbReference>
<dbReference type="PANTHER" id="PTHR42698">
    <property type="entry name" value="GTPASE ERA"/>
    <property type="match status" value="1"/>
</dbReference>
<dbReference type="PANTHER" id="PTHR42698:SF1">
    <property type="entry name" value="GTPASE ERA, MITOCHONDRIAL"/>
    <property type="match status" value="1"/>
</dbReference>
<dbReference type="Pfam" id="PF07650">
    <property type="entry name" value="KH_2"/>
    <property type="match status" value="1"/>
</dbReference>
<dbReference type="Pfam" id="PF01926">
    <property type="entry name" value="MMR_HSR1"/>
    <property type="match status" value="1"/>
</dbReference>
<dbReference type="PRINTS" id="PR00326">
    <property type="entry name" value="GTP1OBG"/>
</dbReference>
<dbReference type="SUPFAM" id="SSF52540">
    <property type="entry name" value="P-loop containing nucleoside triphosphate hydrolases"/>
    <property type="match status" value="1"/>
</dbReference>
<dbReference type="SUPFAM" id="SSF54814">
    <property type="entry name" value="Prokaryotic type KH domain (KH-domain type II)"/>
    <property type="match status" value="1"/>
</dbReference>
<dbReference type="PROSITE" id="PS51713">
    <property type="entry name" value="G_ERA"/>
    <property type="match status" value="1"/>
</dbReference>
<dbReference type="PROSITE" id="PS50823">
    <property type="entry name" value="KH_TYPE_2"/>
    <property type="match status" value="1"/>
</dbReference>
<organism>
    <name type="scientific">Xanthomonas campestris pv. campestris (strain 8004)</name>
    <dbReference type="NCBI Taxonomy" id="314565"/>
    <lineage>
        <taxon>Bacteria</taxon>
        <taxon>Pseudomonadati</taxon>
        <taxon>Pseudomonadota</taxon>
        <taxon>Gammaproteobacteria</taxon>
        <taxon>Lysobacterales</taxon>
        <taxon>Lysobacteraceae</taxon>
        <taxon>Xanthomonas</taxon>
    </lineage>
</organism>
<sequence>MSETSPHRSGSVAVIGRPNVGKSTLTNALVGAKVSIVSNRPQTTRHRLLGIATFPEGQLMLVDTPGLHREQKRAMNRVMNRAARGSLEGVDAAVLVIEAGRWDEEDTLAFRVLSDADVPVVLVVNKVDRLKDKTALFPFLAQVSEGRTFAAVHPVSALKRKGLEALVSDLLKLVPEAEAMYGEDEITDRSQRFLAGELVREQLMRQLGEELPYATTVEIERFAEDGALLRIGAVIWVEREGQKAIVIGKGGTRLKDIGGKARLQMERLFGAKVFLETWVRVREGWSDDEAALKAFGYD</sequence>
<reference key="1">
    <citation type="journal article" date="2005" name="Genome Res.">
        <title>Comparative and functional genomic analyses of the pathogenicity of phytopathogen Xanthomonas campestris pv. campestris.</title>
        <authorList>
            <person name="Qian W."/>
            <person name="Jia Y."/>
            <person name="Ren S.-X."/>
            <person name="He Y.-Q."/>
            <person name="Feng J.-X."/>
            <person name="Lu L.-F."/>
            <person name="Sun Q."/>
            <person name="Ying G."/>
            <person name="Tang D.-J."/>
            <person name="Tang H."/>
            <person name="Wu W."/>
            <person name="Hao P."/>
            <person name="Wang L."/>
            <person name="Jiang B.-L."/>
            <person name="Zeng S."/>
            <person name="Gu W.-Y."/>
            <person name="Lu G."/>
            <person name="Rong L."/>
            <person name="Tian Y."/>
            <person name="Yao Z."/>
            <person name="Fu G."/>
            <person name="Chen B."/>
            <person name="Fang R."/>
            <person name="Qiang B."/>
            <person name="Chen Z."/>
            <person name="Zhao G.-P."/>
            <person name="Tang J.-L."/>
            <person name="He C."/>
        </authorList>
    </citation>
    <scope>NUCLEOTIDE SEQUENCE [LARGE SCALE GENOMIC DNA]</scope>
    <source>
        <strain>8004</strain>
    </source>
</reference>
<feature type="chain" id="PRO_1000079769" description="GTPase Era">
    <location>
        <begin position="1"/>
        <end position="298"/>
    </location>
</feature>
<feature type="domain" description="Era-type G" evidence="2">
    <location>
        <begin position="8"/>
        <end position="176"/>
    </location>
</feature>
<feature type="domain" description="KH type-2" evidence="1">
    <location>
        <begin position="199"/>
        <end position="283"/>
    </location>
</feature>
<feature type="region of interest" description="G1" evidence="2">
    <location>
        <begin position="16"/>
        <end position="23"/>
    </location>
</feature>
<feature type="region of interest" description="G2" evidence="2">
    <location>
        <begin position="42"/>
        <end position="46"/>
    </location>
</feature>
<feature type="region of interest" description="G3" evidence="2">
    <location>
        <begin position="63"/>
        <end position="66"/>
    </location>
</feature>
<feature type="region of interest" description="G4" evidence="2">
    <location>
        <begin position="125"/>
        <end position="128"/>
    </location>
</feature>
<feature type="region of interest" description="G5" evidence="2">
    <location>
        <begin position="155"/>
        <end position="157"/>
    </location>
</feature>
<feature type="binding site" evidence="1">
    <location>
        <begin position="16"/>
        <end position="23"/>
    </location>
    <ligand>
        <name>GTP</name>
        <dbReference type="ChEBI" id="CHEBI:37565"/>
    </ligand>
</feature>
<feature type="binding site" evidence="1">
    <location>
        <begin position="63"/>
        <end position="67"/>
    </location>
    <ligand>
        <name>GTP</name>
        <dbReference type="ChEBI" id="CHEBI:37565"/>
    </ligand>
</feature>
<feature type="binding site" evidence="1">
    <location>
        <begin position="125"/>
        <end position="128"/>
    </location>
    <ligand>
        <name>GTP</name>
        <dbReference type="ChEBI" id="CHEBI:37565"/>
    </ligand>
</feature>
<proteinExistence type="inferred from homology"/>
<comment type="function">
    <text evidence="1">An essential GTPase that binds both GDP and GTP, with rapid nucleotide exchange. Plays a role in 16S rRNA processing and 30S ribosomal subunit biogenesis and possibly also in cell cycle regulation and energy metabolism.</text>
</comment>
<comment type="subunit">
    <text evidence="1">Monomer.</text>
</comment>
<comment type="subcellular location">
    <subcellularLocation>
        <location>Cytoplasm</location>
    </subcellularLocation>
    <subcellularLocation>
        <location evidence="1">Cell inner membrane</location>
        <topology evidence="1">Peripheral membrane protein</topology>
    </subcellularLocation>
</comment>
<comment type="similarity">
    <text evidence="1 2">Belongs to the TRAFAC class TrmE-Era-EngA-EngB-Septin-like GTPase superfamily. Era GTPase family.</text>
</comment>
<name>ERA_XANC8</name>